<evidence type="ECO:0000250" key="1">
    <source>
        <dbReference type="UniProtKB" id="Q80HV6"/>
    </source>
</evidence>
<evidence type="ECO:0000255" key="2"/>
<evidence type="ECO:0000305" key="3"/>
<proteinExistence type="evidence at transcript level"/>
<reference key="1">
    <citation type="journal article" date="1993" name="FEBS Lett.">
        <title>Genes of variola and vaccinia viruses necessary to overcome the host protective mechanisms.</title>
        <authorList>
            <person name="Shchelkunov S.N."/>
            <person name="Blinov V.M."/>
            <person name="Sandakhchiev L.S."/>
        </authorList>
    </citation>
    <scope>NUCLEOTIDE SEQUENCE [LARGE SCALE GENOMIC DNA]</scope>
</reference>
<dbReference type="EMBL" id="X69198">
    <property type="status" value="NOT_ANNOTATED_CDS"/>
    <property type="molecule type" value="Genomic_DNA"/>
</dbReference>
<dbReference type="SMR" id="P0CK27"/>
<dbReference type="Proteomes" id="UP000002060">
    <property type="component" value="Segment"/>
</dbReference>
<dbReference type="GO" id="GO:0016020">
    <property type="term" value="C:membrane"/>
    <property type="evidence" value="ECO:0007669"/>
    <property type="project" value="UniProtKB-KW"/>
</dbReference>
<dbReference type="GO" id="GO:0055036">
    <property type="term" value="C:virion membrane"/>
    <property type="evidence" value="ECO:0007669"/>
    <property type="project" value="UniProtKB-SubCell"/>
</dbReference>
<dbReference type="GO" id="GO:0005524">
    <property type="term" value="F:ATP binding"/>
    <property type="evidence" value="ECO:0007669"/>
    <property type="project" value="UniProtKB-KW"/>
</dbReference>
<dbReference type="GO" id="GO:0003677">
    <property type="term" value="F:DNA binding"/>
    <property type="evidence" value="ECO:0007669"/>
    <property type="project" value="UniProtKB-KW"/>
</dbReference>
<dbReference type="GO" id="GO:0004386">
    <property type="term" value="F:helicase activity"/>
    <property type="evidence" value="ECO:0007669"/>
    <property type="project" value="UniProtKB-KW"/>
</dbReference>
<dbReference type="GO" id="GO:0016787">
    <property type="term" value="F:hydrolase activity"/>
    <property type="evidence" value="ECO:0007669"/>
    <property type="project" value="UniProtKB-KW"/>
</dbReference>
<dbReference type="GO" id="GO:0006353">
    <property type="term" value="P:DNA-templated transcription termination"/>
    <property type="evidence" value="ECO:0007669"/>
    <property type="project" value="UniProtKB-KW"/>
</dbReference>
<dbReference type="InterPro" id="IPR009372">
    <property type="entry name" value="Poxvirus_A14.5"/>
</dbReference>
<dbReference type="Pfam" id="PF06269">
    <property type="entry name" value="DUF1029"/>
    <property type="match status" value="1"/>
</dbReference>
<keyword id="KW-0067">ATP-binding</keyword>
<keyword id="KW-0238">DNA-binding</keyword>
<keyword id="KW-0347">Helicase</keyword>
<keyword id="KW-0378">Hydrolase</keyword>
<keyword id="KW-0426">Late protein</keyword>
<keyword id="KW-0472">Membrane</keyword>
<keyword id="KW-0547">Nucleotide-binding</keyword>
<keyword id="KW-0597">Phosphoprotein</keyword>
<keyword id="KW-1185">Reference proteome</keyword>
<keyword id="KW-0804">Transcription</keyword>
<keyword id="KW-0805">Transcription regulation</keyword>
<keyword id="KW-0806">Transcription termination</keyword>
<keyword id="KW-0812">Transmembrane</keyword>
<keyword id="KW-1133">Transmembrane helix</keyword>
<keyword id="KW-0946">Virion</keyword>
<protein>
    <recommendedName>
        <fullName>Virion membrane protein OPG141</fullName>
    </recommendedName>
</protein>
<feature type="chain" id="PRO_0000414117" description="Virion membrane protein OPG141">
    <location>
        <begin position="1"/>
        <end position="53"/>
    </location>
</feature>
<feature type="topological domain" description="Intravirion" evidence="2">
    <location>
        <begin position="1"/>
        <end position="4"/>
    </location>
</feature>
<feature type="transmembrane region" description="Helical" evidence="2">
    <location>
        <begin position="5"/>
        <end position="25"/>
    </location>
</feature>
<feature type="topological domain" description="Virion surface" evidence="2">
    <location>
        <begin position="26"/>
        <end position="29"/>
    </location>
</feature>
<feature type="transmembrane region" description="Helical" evidence="2">
    <location>
        <begin position="30"/>
        <end position="50"/>
    </location>
</feature>
<feature type="topological domain" description="Intravirion" evidence="2">
    <location>
        <begin position="51"/>
        <end position="53"/>
    </location>
</feature>
<organism>
    <name type="scientific">Variola virus (isolate Human/India/Ind3/1967)</name>
    <name type="common">VARV</name>
    <name type="synonym">Smallpox virus</name>
    <dbReference type="NCBI Taxonomy" id="587200"/>
    <lineage>
        <taxon>Viruses</taxon>
        <taxon>Varidnaviria</taxon>
        <taxon>Bamfordvirae</taxon>
        <taxon>Nucleocytoviricota</taxon>
        <taxon>Pokkesviricetes</taxon>
        <taxon>Chitovirales</taxon>
        <taxon>Poxviridae</taxon>
        <taxon>Chordopoxvirinae</taxon>
        <taxon>Orthopoxvirus</taxon>
        <taxon>Variola virus</taxon>
    </lineage>
</organism>
<gene>
    <name type="primary">OPG141</name>
    <name type="ORF">A 14.5L</name>
</gene>
<sequence length="53" mass="6165">MISNYEPLLLLVITCCVLLFNFTISSKTKIDIIFAVQTIVFIWFIFHFVHSAI</sequence>
<organismHost>
    <name type="scientific">Homo sapiens</name>
    <name type="common">Human</name>
    <dbReference type="NCBI Taxonomy" id="9606"/>
</organismHost>
<comment type="function">
    <text evidence="1">Protein probably involved in counteracting host defense, since it enhances virulence in vivo.</text>
</comment>
<comment type="subcellular location">
    <subcellularLocation>
        <location evidence="1">Virion membrane</location>
        <topology evidence="1">Multi-pass membrane protein</topology>
    </subcellularLocation>
    <text evidence="1">Component of the mature virion (MV) membrane.</text>
</comment>
<comment type="induction">
    <text>Expressed in the late phase of the viral replicative cycle.</text>
</comment>
<comment type="PTM">
    <text evidence="1">Not phosphorylated.</text>
</comment>
<comment type="similarity">
    <text evidence="3">Belongs to the orthopoxvirus OPG141 protein family.</text>
</comment>
<accession>P0CK27</accession>
<name>PG141_VAR67</name>